<name>SYK_THEP3</name>
<evidence type="ECO:0000255" key="1">
    <source>
        <dbReference type="HAMAP-Rule" id="MF_00252"/>
    </source>
</evidence>
<feature type="chain" id="PRO_1000101154" description="Lysine--tRNA ligase">
    <location>
        <begin position="1"/>
        <end position="499"/>
    </location>
</feature>
<feature type="binding site" evidence="1">
    <location>
        <position position="408"/>
    </location>
    <ligand>
        <name>Mg(2+)</name>
        <dbReference type="ChEBI" id="CHEBI:18420"/>
        <label>1</label>
    </ligand>
</feature>
<feature type="binding site" evidence="1">
    <location>
        <position position="415"/>
    </location>
    <ligand>
        <name>Mg(2+)</name>
        <dbReference type="ChEBI" id="CHEBI:18420"/>
        <label>1</label>
    </ligand>
</feature>
<feature type="binding site" evidence="1">
    <location>
        <position position="415"/>
    </location>
    <ligand>
        <name>Mg(2+)</name>
        <dbReference type="ChEBI" id="CHEBI:18420"/>
        <label>2</label>
    </ligand>
</feature>
<proteinExistence type="inferred from homology"/>
<comment type="catalytic activity">
    <reaction evidence="1">
        <text>tRNA(Lys) + L-lysine + ATP = L-lysyl-tRNA(Lys) + AMP + diphosphate</text>
        <dbReference type="Rhea" id="RHEA:20792"/>
        <dbReference type="Rhea" id="RHEA-COMP:9696"/>
        <dbReference type="Rhea" id="RHEA-COMP:9697"/>
        <dbReference type="ChEBI" id="CHEBI:30616"/>
        <dbReference type="ChEBI" id="CHEBI:32551"/>
        <dbReference type="ChEBI" id="CHEBI:33019"/>
        <dbReference type="ChEBI" id="CHEBI:78442"/>
        <dbReference type="ChEBI" id="CHEBI:78529"/>
        <dbReference type="ChEBI" id="CHEBI:456215"/>
        <dbReference type="EC" id="6.1.1.6"/>
    </reaction>
</comment>
<comment type="cofactor">
    <cofactor evidence="1">
        <name>Mg(2+)</name>
        <dbReference type="ChEBI" id="CHEBI:18420"/>
    </cofactor>
    <text evidence="1">Binds 3 Mg(2+) ions per subunit.</text>
</comment>
<comment type="subunit">
    <text evidence="1">Homodimer.</text>
</comment>
<comment type="subcellular location">
    <subcellularLocation>
        <location evidence="1">Cytoplasm</location>
    </subcellularLocation>
</comment>
<comment type="similarity">
    <text evidence="1">Belongs to the class-II aminoacyl-tRNA synthetase family.</text>
</comment>
<keyword id="KW-0030">Aminoacyl-tRNA synthetase</keyword>
<keyword id="KW-0067">ATP-binding</keyword>
<keyword id="KW-0963">Cytoplasm</keyword>
<keyword id="KW-0436">Ligase</keyword>
<keyword id="KW-0460">Magnesium</keyword>
<keyword id="KW-0479">Metal-binding</keyword>
<keyword id="KW-0547">Nucleotide-binding</keyword>
<keyword id="KW-0648">Protein biosynthesis</keyword>
<keyword id="KW-1185">Reference proteome</keyword>
<sequence>MSNSNDNIWNNTEELNELLRIRREKLNILRSMGIEPYGIDRFERTNLSSDIKNDYENFEGKVVTLAGRIMSKRSHGKASFADIQDRDGRIQIYVKYDTVGEKNYEIFKILDIGDIIGVTGEVFKSKTGEITIRVTDFKLLSKSLQILPEKWHGLKDPDLRYRQRYTDLIINPEVKEVFLKRTKIIKAIREFLDNRGFLEVETPILHTIAGGAAARPFITHHNALDIDMYLRIALELHLKRLIVGGLEKVYEMGRVFRNEGMDIRHNPEFTLLELYEAYTDYYGMMELTEQLFAYVAQKVNGITKIVYQGTEIDLTPPWKRITMVDAIKEYVGVDFNEVKTDEEAIEIAKKLNLETKEGMKKGEVIALVFDELVEQHLIQPTFVMDYPVEISPLAKRKHDNPAFTSRFEAFIYGREVANAFSELNDPIDQKERFLEQLKQREAGDEEAHMMDEDFINALEVGMPPTGGLGIGVDRLVMFMTDAYSIRDVILFPTMKPKND</sequence>
<reference key="1">
    <citation type="submission" date="2008-01" db="EMBL/GenBank/DDBJ databases">
        <title>Complete sequence of Thermoanaerobacter pseudethanolicus 39E.</title>
        <authorList>
            <person name="Copeland A."/>
            <person name="Lucas S."/>
            <person name="Lapidus A."/>
            <person name="Barry K."/>
            <person name="Glavina del Rio T."/>
            <person name="Dalin E."/>
            <person name="Tice H."/>
            <person name="Pitluck S."/>
            <person name="Bruce D."/>
            <person name="Goodwin L."/>
            <person name="Saunders E."/>
            <person name="Brettin T."/>
            <person name="Detter J.C."/>
            <person name="Han C."/>
            <person name="Schmutz J."/>
            <person name="Larimer F."/>
            <person name="Land M."/>
            <person name="Hauser L."/>
            <person name="Kyrpides N."/>
            <person name="Lykidis A."/>
            <person name="Hemme C."/>
            <person name="Fields M.W."/>
            <person name="He Z."/>
            <person name="Zhou J."/>
            <person name="Richardson P."/>
        </authorList>
    </citation>
    <scope>NUCLEOTIDE SEQUENCE [LARGE SCALE GENOMIC DNA]</scope>
    <source>
        <strain>ATCC 33223 / DSM 2355 / 39E</strain>
    </source>
</reference>
<protein>
    <recommendedName>
        <fullName evidence="1">Lysine--tRNA ligase</fullName>
        <ecNumber evidence="1">6.1.1.6</ecNumber>
    </recommendedName>
    <alternativeName>
        <fullName evidence="1">Lysyl-tRNA synthetase</fullName>
        <shortName evidence="1">LysRS</shortName>
    </alternativeName>
</protein>
<accession>B0KCE4</accession>
<dbReference type="EC" id="6.1.1.6" evidence="1"/>
<dbReference type="EMBL" id="CP000924">
    <property type="protein sequence ID" value="ABY93987.1"/>
    <property type="molecule type" value="Genomic_DNA"/>
</dbReference>
<dbReference type="RefSeq" id="WP_012268971.1">
    <property type="nucleotide sequence ID" value="NC_010321.1"/>
</dbReference>
<dbReference type="SMR" id="B0KCE4"/>
<dbReference type="STRING" id="340099.Teth39_0318"/>
<dbReference type="KEGG" id="tpd:Teth39_0318"/>
<dbReference type="eggNOG" id="COG1190">
    <property type="taxonomic scope" value="Bacteria"/>
</dbReference>
<dbReference type="HOGENOM" id="CLU_008255_6_0_9"/>
<dbReference type="Proteomes" id="UP000002156">
    <property type="component" value="Chromosome"/>
</dbReference>
<dbReference type="GO" id="GO:0005829">
    <property type="term" value="C:cytosol"/>
    <property type="evidence" value="ECO:0007669"/>
    <property type="project" value="TreeGrafter"/>
</dbReference>
<dbReference type="GO" id="GO:0005524">
    <property type="term" value="F:ATP binding"/>
    <property type="evidence" value="ECO:0007669"/>
    <property type="project" value="UniProtKB-UniRule"/>
</dbReference>
<dbReference type="GO" id="GO:0140096">
    <property type="term" value="F:catalytic activity, acting on a protein"/>
    <property type="evidence" value="ECO:0007669"/>
    <property type="project" value="UniProtKB-ARBA"/>
</dbReference>
<dbReference type="GO" id="GO:0004824">
    <property type="term" value="F:lysine-tRNA ligase activity"/>
    <property type="evidence" value="ECO:0007669"/>
    <property type="project" value="UniProtKB-UniRule"/>
</dbReference>
<dbReference type="GO" id="GO:0000287">
    <property type="term" value="F:magnesium ion binding"/>
    <property type="evidence" value="ECO:0007669"/>
    <property type="project" value="UniProtKB-UniRule"/>
</dbReference>
<dbReference type="GO" id="GO:0016740">
    <property type="term" value="F:transferase activity"/>
    <property type="evidence" value="ECO:0007669"/>
    <property type="project" value="UniProtKB-ARBA"/>
</dbReference>
<dbReference type="GO" id="GO:0000049">
    <property type="term" value="F:tRNA binding"/>
    <property type="evidence" value="ECO:0007669"/>
    <property type="project" value="TreeGrafter"/>
</dbReference>
<dbReference type="GO" id="GO:0006430">
    <property type="term" value="P:lysyl-tRNA aminoacylation"/>
    <property type="evidence" value="ECO:0007669"/>
    <property type="project" value="UniProtKB-UniRule"/>
</dbReference>
<dbReference type="CDD" id="cd00775">
    <property type="entry name" value="LysRS_core"/>
    <property type="match status" value="1"/>
</dbReference>
<dbReference type="CDD" id="cd04322">
    <property type="entry name" value="LysRS_N"/>
    <property type="match status" value="1"/>
</dbReference>
<dbReference type="FunFam" id="2.40.50.140:FF:000024">
    <property type="entry name" value="Lysine--tRNA ligase"/>
    <property type="match status" value="1"/>
</dbReference>
<dbReference type="FunFam" id="3.30.930.10:FF:000001">
    <property type="entry name" value="Lysine--tRNA ligase"/>
    <property type="match status" value="1"/>
</dbReference>
<dbReference type="Gene3D" id="3.30.930.10">
    <property type="entry name" value="Bira Bifunctional Protein, Domain 2"/>
    <property type="match status" value="1"/>
</dbReference>
<dbReference type="Gene3D" id="2.40.50.140">
    <property type="entry name" value="Nucleic acid-binding proteins"/>
    <property type="match status" value="1"/>
</dbReference>
<dbReference type="HAMAP" id="MF_00252">
    <property type="entry name" value="Lys_tRNA_synth_class2"/>
    <property type="match status" value="1"/>
</dbReference>
<dbReference type="InterPro" id="IPR004364">
    <property type="entry name" value="Aa-tRNA-synt_II"/>
</dbReference>
<dbReference type="InterPro" id="IPR006195">
    <property type="entry name" value="aa-tRNA-synth_II"/>
</dbReference>
<dbReference type="InterPro" id="IPR045864">
    <property type="entry name" value="aa-tRNA-synth_II/BPL/LPL"/>
</dbReference>
<dbReference type="InterPro" id="IPR002313">
    <property type="entry name" value="Lys-tRNA-ligase_II"/>
</dbReference>
<dbReference type="InterPro" id="IPR034762">
    <property type="entry name" value="Lys-tRNA-ligase_II_bac/euk"/>
</dbReference>
<dbReference type="InterPro" id="IPR044136">
    <property type="entry name" value="Lys-tRNA-ligase_II_N"/>
</dbReference>
<dbReference type="InterPro" id="IPR018149">
    <property type="entry name" value="Lys-tRNA-synth_II_C"/>
</dbReference>
<dbReference type="InterPro" id="IPR012340">
    <property type="entry name" value="NA-bd_OB-fold"/>
</dbReference>
<dbReference type="InterPro" id="IPR004365">
    <property type="entry name" value="NA-bd_OB_tRNA"/>
</dbReference>
<dbReference type="NCBIfam" id="TIGR00499">
    <property type="entry name" value="lysS_bact"/>
    <property type="match status" value="1"/>
</dbReference>
<dbReference type="NCBIfam" id="NF001756">
    <property type="entry name" value="PRK00484.1"/>
    <property type="match status" value="1"/>
</dbReference>
<dbReference type="PANTHER" id="PTHR42918:SF15">
    <property type="entry name" value="LYSINE--TRNA LIGASE, CHLOROPLASTIC_MITOCHONDRIAL"/>
    <property type="match status" value="1"/>
</dbReference>
<dbReference type="PANTHER" id="PTHR42918">
    <property type="entry name" value="LYSYL-TRNA SYNTHETASE"/>
    <property type="match status" value="1"/>
</dbReference>
<dbReference type="Pfam" id="PF00152">
    <property type="entry name" value="tRNA-synt_2"/>
    <property type="match status" value="1"/>
</dbReference>
<dbReference type="Pfam" id="PF01336">
    <property type="entry name" value="tRNA_anti-codon"/>
    <property type="match status" value="1"/>
</dbReference>
<dbReference type="PIRSF" id="PIRSF039101">
    <property type="entry name" value="LysRS2"/>
    <property type="match status" value="1"/>
</dbReference>
<dbReference type="PRINTS" id="PR00982">
    <property type="entry name" value="TRNASYNTHLYS"/>
</dbReference>
<dbReference type="SUPFAM" id="SSF55681">
    <property type="entry name" value="Class II aaRS and biotin synthetases"/>
    <property type="match status" value="1"/>
</dbReference>
<dbReference type="SUPFAM" id="SSF50249">
    <property type="entry name" value="Nucleic acid-binding proteins"/>
    <property type="match status" value="1"/>
</dbReference>
<dbReference type="PROSITE" id="PS50862">
    <property type="entry name" value="AA_TRNA_LIGASE_II"/>
    <property type="match status" value="1"/>
</dbReference>
<gene>
    <name evidence="1" type="primary">lysS</name>
    <name type="ordered locus">Teth39_0318</name>
</gene>
<organism>
    <name type="scientific">Thermoanaerobacter pseudethanolicus (strain ATCC 33223 / 39E)</name>
    <name type="common">Clostridium thermohydrosulfuricum</name>
    <dbReference type="NCBI Taxonomy" id="340099"/>
    <lineage>
        <taxon>Bacteria</taxon>
        <taxon>Bacillati</taxon>
        <taxon>Bacillota</taxon>
        <taxon>Clostridia</taxon>
        <taxon>Thermoanaerobacterales</taxon>
        <taxon>Thermoanaerobacteraceae</taxon>
        <taxon>Thermoanaerobacter</taxon>
    </lineage>
</organism>